<dbReference type="EMBL" id="BC109756">
    <property type="protein sequence ID" value="AAI09757.1"/>
    <property type="molecule type" value="mRNA"/>
</dbReference>
<dbReference type="RefSeq" id="NP_001033629.1">
    <property type="nucleotide sequence ID" value="NM_001038540.1"/>
</dbReference>
<dbReference type="SMR" id="Q2TBR6"/>
<dbReference type="FunCoup" id="Q2TBR6">
    <property type="interactions" value="3940"/>
</dbReference>
<dbReference type="STRING" id="9913.ENSBTAP00000057761"/>
<dbReference type="PaxDb" id="9913-ENSBTAP00000011605"/>
<dbReference type="Ensembl" id="ENSBTAT00000011605.6">
    <property type="protein sequence ID" value="ENSBTAP00000011605.6"/>
    <property type="gene ID" value="ENSBTAG00000008812.7"/>
</dbReference>
<dbReference type="GeneID" id="514621"/>
<dbReference type="KEGG" id="bta:514621"/>
<dbReference type="CTD" id="5203"/>
<dbReference type="VEuPathDB" id="HostDB:ENSBTAG00000008812"/>
<dbReference type="VGNC" id="VGNC:111261">
    <property type="gene designation" value="PFDN4"/>
</dbReference>
<dbReference type="eggNOG" id="KOG1760">
    <property type="taxonomic scope" value="Eukaryota"/>
</dbReference>
<dbReference type="GeneTree" id="ENSGT00390000006696"/>
<dbReference type="InParanoid" id="Q2TBR6"/>
<dbReference type="OMA" id="NARMDEF"/>
<dbReference type="OrthoDB" id="10250441at2759"/>
<dbReference type="Proteomes" id="UP000009136">
    <property type="component" value="Chromosome 13"/>
</dbReference>
<dbReference type="Bgee" id="ENSBTAG00000008812">
    <property type="expression patterns" value="Expressed in biceps femoris and 105 other cell types or tissues"/>
</dbReference>
<dbReference type="GO" id="GO:0005737">
    <property type="term" value="C:cytoplasm"/>
    <property type="evidence" value="ECO:0000250"/>
    <property type="project" value="UniProtKB"/>
</dbReference>
<dbReference type="GO" id="GO:0005829">
    <property type="term" value="C:cytosol"/>
    <property type="evidence" value="ECO:0000304"/>
    <property type="project" value="Reactome"/>
</dbReference>
<dbReference type="GO" id="GO:0005739">
    <property type="term" value="C:mitochondrion"/>
    <property type="evidence" value="ECO:0000250"/>
    <property type="project" value="UniProtKB"/>
</dbReference>
<dbReference type="GO" id="GO:0005634">
    <property type="term" value="C:nucleus"/>
    <property type="evidence" value="ECO:0000250"/>
    <property type="project" value="UniProtKB"/>
</dbReference>
<dbReference type="GO" id="GO:0016272">
    <property type="term" value="C:prefoldin complex"/>
    <property type="evidence" value="ECO:0000318"/>
    <property type="project" value="GO_Central"/>
</dbReference>
<dbReference type="GO" id="GO:0051082">
    <property type="term" value="F:unfolded protein binding"/>
    <property type="evidence" value="ECO:0000318"/>
    <property type="project" value="GO_Central"/>
</dbReference>
<dbReference type="GO" id="GO:0006457">
    <property type="term" value="P:protein folding"/>
    <property type="evidence" value="ECO:0000318"/>
    <property type="project" value="GO_Central"/>
</dbReference>
<dbReference type="CDD" id="cd23165">
    <property type="entry name" value="Prefoldin_4"/>
    <property type="match status" value="1"/>
</dbReference>
<dbReference type="FunFam" id="1.10.287.370:FF:000005">
    <property type="entry name" value="Prefoldin subunit 4"/>
    <property type="match status" value="1"/>
</dbReference>
<dbReference type="Gene3D" id="1.10.287.370">
    <property type="match status" value="1"/>
</dbReference>
<dbReference type="InterPro" id="IPR002777">
    <property type="entry name" value="PFD_beta-like"/>
</dbReference>
<dbReference type="InterPro" id="IPR016661">
    <property type="entry name" value="PFDN4"/>
</dbReference>
<dbReference type="InterPro" id="IPR009053">
    <property type="entry name" value="Prefoldin"/>
</dbReference>
<dbReference type="PANTHER" id="PTHR21100">
    <property type="entry name" value="PREFOLDIN SUBUNIT 4"/>
    <property type="match status" value="1"/>
</dbReference>
<dbReference type="PANTHER" id="PTHR21100:SF9">
    <property type="entry name" value="PREFOLDIN SUBUNIT 4"/>
    <property type="match status" value="1"/>
</dbReference>
<dbReference type="Pfam" id="PF01920">
    <property type="entry name" value="Prefoldin_2"/>
    <property type="match status" value="1"/>
</dbReference>
<dbReference type="PIRSF" id="PIRSF016477">
    <property type="entry name" value="Prefoldin_subunit_4"/>
    <property type="match status" value="1"/>
</dbReference>
<dbReference type="SUPFAM" id="SSF46579">
    <property type="entry name" value="Prefoldin"/>
    <property type="match status" value="1"/>
</dbReference>
<keyword id="KW-0007">Acetylation</keyword>
<keyword id="KW-0143">Chaperone</keyword>
<keyword id="KW-0963">Cytoplasm</keyword>
<keyword id="KW-0496">Mitochondrion</keyword>
<keyword id="KW-0539">Nucleus</keyword>
<keyword id="KW-0597">Phosphoprotein</keyword>
<keyword id="KW-1185">Reference proteome</keyword>
<organism>
    <name type="scientific">Bos taurus</name>
    <name type="common">Bovine</name>
    <dbReference type="NCBI Taxonomy" id="9913"/>
    <lineage>
        <taxon>Eukaryota</taxon>
        <taxon>Metazoa</taxon>
        <taxon>Chordata</taxon>
        <taxon>Craniata</taxon>
        <taxon>Vertebrata</taxon>
        <taxon>Euteleostomi</taxon>
        <taxon>Mammalia</taxon>
        <taxon>Eutheria</taxon>
        <taxon>Laurasiatheria</taxon>
        <taxon>Artiodactyla</taxon>
        <taxon>Ruminantia</taxon>
        <taxon>Pecora</taxon>
        <taxon>Bovidae</taxon>
        <taxon>Bovinae</taxon>
        <taxon>Bos</taxon>
    </lineage>
</organism>
<reference key="1">
    <citation type="submission" date="2005-11" db="EMBL/GenBank/DDBJ databases">
        <authorList>
            <consortium name="NIH - Mammalian Gene Collection (MGC) project"/>
        </authorList>
    </citation>
    <scope>NUCLEOTIDE SEQUENCE [LARGE SCALE MRNA]</scope>
    <source>
        <strain>Crossbred X Angus</strain>
        <tissue>Liver</tissue>
    </source>
</reference>
<feature type="initiator methionine" description="Removed" evidence="2">
    <location>
        <position position="1"/>
    </location>
</feature>
<feature type="chain" id="PRO_0000282858" description="Prefoldin subunit 4">
    <location>
        <begin position="2"/>
        <end position="134"/>
    </location>
</feature>
<feature type="modified residue" description="N-acetylalanine" evidence="2">
    <location>
        <position position="2"/>
    </location>
</feature>
<feature type="modified residue" description="Phosphoserine" evidence="2">
    <location>
        <position position="125"/>
    </location>
</feature>
<comment type="function">
    <text evidence="1">Binds specifically to cytosolic chaperonin (c-CPN) and transfers target proteins to it. Binds to nascent polypeptide chain and promotes folding in an environment in which there are many competing pathways for nonnative proteins (By similarity).</text>
</comment>
<comment type="subunit">
    <text evidence="1">Heterohexamer of two PFD-alpha type and four PFD-beta type subunits. Interacts with URI1; the interaction is phosphorylation-dependent and occurs in a growth-dependent manner (By similarity).</text>
</comment>
<comment type="subcellular location">
    <subcellularLocation>
        <location evidence="1">Nucleus</location>
    </subcellularLocation>
    <subcellularLocation>
        <location evidence="1">Cytoplasm</location>
    </subcellularLocation>
    <subcellularLocation>
        <location evidence="1">Mitochondrion</location>
    </subcellularLocation>
</comment>
<comment type="similarity">
    <text evidence="3">Belongs to the prefoldin subunit beta family.</text>
</comment>
<sequence length="134" mass="15328">MAATMKKAAAEDVNVTFEDQQKINKFARNTSRITELKEEIEVKKKQLQNLEDACEDIMLADDDCLMIPYQIGDVFISHSQEETQEMLEEAKKNLQEEIDALESRVESIQRVLADLKVQLYAKFGSNINLEADES</sequence>
<protein>
    <recommendedName>
        <fullName>Prefoldin subunit 4</fullName>
    </recommendedName>
</protein>
<proteinExistence type="evidence at transcript level"/>
<gene>
    <name type="primary">PFDN4</name>
</gene>
<accession>Q2TBR6</accession>
<evidence type="ECO:0000250" key="1"/>
<evidence type="ECO:0000250" key="2">
    <source>
        <dbReference type="UniProtKB" id="Q9NQP4"/>
    </source>
</evidence>
<evidence type="ECO:0000305" key="3"/>
<name>PFD4_BOVIN</name>